<name>GREA_HAMD5</name>
<dbReference type="EMBL" id="CP001277">
    <property type="protein sequence ID" value="ACQ68552.1"/>
    <property type="molecule type" value="Genomic_DNA"/>
</dbReference>
<dbReference type="RefSeq" id="WP_015874311.1">
    <property type="nucleotide sequence ID" value="NC_012751.1"/>
</dbReference>
<dbReference type="SMR" id="C4K7K9"/>
<dbReference type="STRING" id="572265.HDEF_1966"/>
<dbReference type="GeneID" id="66261536"/>
<dbReference type="KEGG" id="hde:HDEF_1966"/>
<dbReference type="eggNOG" id="COG0782">
    <property type="taxonomic scope" value="Bacteria"/>
</dbReference>
<dbReference type="HOGENOM" id="CLU_101379_2_0_6"/>
<dbReference type="Proteomes" id="UP000002334">
    <property type="component" value="Chromosome"/>
</dbReference>
<dbReference type="GO" id="GO:0003677">
    <property type="term" value="F:DNA binding"/>
    <property type="evidence" value="ECO:0007669"/>
    <property type="project" value="UniProtKB-UniRule"/>
</dbReference>
<dbReference type="GO" id="GO:0070063">
    <property type="term" value="F:RNA polymerase binding"/>
    <property type="evidence" value="ECO:0007669"/>
    <property type="project" value="InterPro"/>
</dbReference>
<dbReference type="GO" id="GO:0006354">
    <property type="term" value="P:DNA-templated transcription elongation"/>
    <property type="evidence" value="ECO:0007669"/>
    <property type="project" value="TreeGrafter"/>
</dbReference>
<dbReference type="GO" id="GO:0032784">
    <property type="term" value="P:regulation of DNA-templated transcription elongation"/>
    <property type="evidence" value="ECO:0007669"/>
    <property type="project" value="UniProtKB-UniRule"/>
</dbReference>
<dbReference type="FunFam" id="1.10.287.180:FF:000001">
    <property type="entry name" value="Transcription elongation factor GreA"/>
    <property type="match status" value="1"/>
</dbReference>
<dbReference type="FunFam" id="3.10.50.30:FF:000001">
    <property type="entry name" value="Transcription elongation factor GreA"/>
    <property type="match status" value="1"/>
</dbReference>
<dbReference type="Gene3D" id="3.10.50.30">
    <property type="entry name" value="Transcription elongation factor, GreA/GreB, C-terminal domain"/>
    <property type="match status" value="1"/>
</dbReference>
<dbReference type="Gene3D" id="1.10.287.180">
    <property type="entry name" value="Transcription elongation factor, GreA/GreB, N-terminal domain"/>
    <property type="match status" value="1"/>
</dbReference>
<dbReference type="HAMAP" id="MF_00105">
    <property type="entry name" value="GreA_GreB"/>
    <property type="match status" value="1"/>
</dbReference>
<dbReference type="InterPro" id="IPR036953">
    <property type="entry name" value="GreA/GreB_C_sf"/>
</dbReference>
<dbReference type="InterPro" id="IPR018151">
    <property type="entry name" value="TF_GreA/GreB_CS"/>
</dbReference>
<dbReference type="InterPro" id="IPR006359">
    <property type="entry name" value="Tscrpt_elong_fac_GreA"/>
</dbReference>
<dbReference type="InterPro" id="IPR028624">
    <property type="entry name" value="Tscrpt_elong_fac_GreA/B"/>
</dbReference>
<dbReference type="InterPro" id="IPR001437">
    <property type="entry name" value="Tscrpt_elong_fac_GreA/B_C"/>
</dbReference>
<dbReference type="InterPro" id="IPR023459">
    <property type="entry name" value="Tscrpt_elong_fac_GreA/B_fam"/>
</dbReference>
<dbReference type="InterPro" id="IPR022691">
    <property type="entry name" value="Tscrpt_elong_fac_GreA/B_N"/>
</dbReference>
<dbReference type="InterPro" id="IPR036805">
    <property type="entry name" value="Tscrpt_elong_fac_GreA/B_N_sf"/>
</dbReference>
<dbReference type="NCBIfam" id="TIGR01462">
    <property type="entry name" value="greA"/>
    <property type="match status" value="1"/>
</dbReference>
<dbReference type="NCBIfam" id="NF001261">
    <property type="entry name" value="PRK00226.1-2"/>
    <property type="match status" value="1"/>
</dbReference>
<dbReference type="NCBIfam" id="NF001263">
    <property type="entry name" value="PRK00226.1-4"/>
    <property type="match status" value="1"/>
</dbReference>
<dbReference type="NCBIfam" id="NF001264">
    <property type="entry name" value="PRK00226.1-5"/>
    <property type="match status" value="1"/>
</dbReference>
<dbReference type="PANTHER" id="PTHR30437">
    <property type="entry name" value="TRANSCRIPTION ELONGATION FACTOR GREA"/>
    <property type="match status" value="1"/>
</dbReference>
<dbReference type="PANTHER" id="PTHR30437:SF4">
    <property type="entry name" value="TRANSCRIPTION ELONGATION FACTOR GREA"/>
    <property type="match status" value="1"/>
</dbReference>
<dbReference type="Pfam" id="PF01272">
    <property type="entry name" value="GreA_GreB"/>
    <property type="match status" value="1"/>
</dbReference>
<dbReference type="Pfam" id="PF03449">
    <property type="entry name" value="GreA_GreB_N"/>
    <property type="match status" value="1"/>
</dbReference>
<dbReference type="PIRSF" id="PIRSF006092">
    <property type="entry name" value="GreA_GreB"/>
    <property type="match status" value="1"/>
</dbReference>
<dbReference type="SUPFAM" id="SSF54534">
    <property type="entry name" value="FKBP-like"/>
    <property type="match status" value="1"/>
</dbReference>
<dbReference type="SUPFAM" id="SSF46557">
    <property type="entry name" value="GreA transcript cleavage protein, N-terminal domain"/>
    <property type="match status" value="1"/>
</dbReference>
<dbReference type="PROSITE" id="PS00829">
    <property type="entry name" value="GREAB_1"/>
    <property type="match status" value="1"/>
</dbReference>
<keyword id="KW-0238">DNA-binding</keyword>
<keyword id="KW-0804">Transcription</keyword>
<keyword id="KW-0805">Transcription regulation</keyword>
<sequence length="158" mass="17587">MTQIPMTLRGAEKLREELQHLKSVLRPQIIAAIAEAREHGDLKENAEYHAAREQQGFCEGRIQEIESKLSHAQIIDVTKIANKGIVIFGATVTVLNTHSEEKKIYQIVGDDEANFKKDLISVNSPIARGLIAKKISDVAVIHTPGGEVEYEILDVKYC</sequence>
<proteinExistence type="inferred from homology"/>
<feature type="chain" id="PRO_1000202860" description="Transcription elongation factor GreA">
    <location>
        <begin position="1"/>
        <end position="158"/>
    </location>
</feature>
<gene>
    <name evidence="1" type="primary">greA</name>
    <name type="ordered locus">HDEF_1966</name>
</gene>
<protein>
    <recommendedName>
        <fullName evidence="1">Transcription elongation factor GreA</fullName>
    </recommendedName>
    <alternativeName>
        <fullName evidence="1">Transcript cleavage factor GreA</fullName>
    </alternativeName>
</protein>
<organism>
    <name type="scientific">Hamiltonella defensa subsp. Acyrthosiphon pisum (strain 5AT)</name>
    <dbReference type="NCBI Taxonomy" id="572265"/>
    <lineage>
        <taxon>Bacteria</taxon>
        <taxon>Pseudomonadati</taxon>
        <taxon>Pseudomonadota</taxon>
        <taxon>Gammaproteobacteria</taxon>
        <taxon>Enterobacterales</taxon>
        <taxon>Enterobacteriaceae</taxon>
        <taxon>aphid secondary symbionts</taxon>
        <taxon>Candidatus Hamiltonella</taxon>
    </lineage>
</organism>
<accession>C4K7K9</accession>
<reference key="1">
    <citation type="journal article" date="2009" name="Proc. Natl. Acad. Sci. U.S.A.">
        <title>Hamiltonella defensa, genome evolution of protective bacterial endosymbiont from pathogenic ancestors.</title>
        <authorList>
            <person name="Degnan P.H."/>
            <person name="Yu Y."/>
            <person name="Sisneros N."/>
            <person name="Wing R.A."/>
            <person name="Moran N.A."/>
        </authorList>
    </citation>
    <scope>NUCLEOTIDE SEQUENCE [LARGE SCALE GENOMIC DNA]</scope>
    <source>
        <strain>5AT</strain>
    </source>
</reference>
<comment type="function">
    <text evidence="1">Necessary for efficient RNA polymerase transcription elongation past template-encoded arresting sites. The arresting sites in DNA have the property of trapping a certain fraction of elongating RNA polymerases that pass through, resulting in locked ternary complexes. Cleavage of the nascent transcript by cleavage factors such as GreA or GreB allows the resumption of elongation from the new 3'terminus. GreA releases sequences of 2 to 3 nucleotides.</text>
</comment>
<comment type="similarity">
    <text evidence="1">Belongs to the GreA/GreB family.</text>
</comment>
<evidence type="ECO:0000255" key="1">
    <source>
        <dbReference type="HAMAP-Rule" id="MF_00105"/>
    </source>
</evidence>